<sequence>MPSVEESLALIKRGAEEIIQEEGLIEKLKRGEPLRIKAGFDPTAPDLHLGHTVLINKLRQFQDLGHQVIFLIGDFTGMIGDPTGKSATRPPLTKEDVAQNAQTYKEQVFKILDPKKTEVRFNSEWMDKLSAADMIRLAGQYTVARMLERDDFHKRYHGEQSISIHEFLYPLVQGYDSVALRADVELGGTDQKFNLLMGRMLQKHYDQEPQVIMTMPILEGLDGVQKMSKSLGNYIGVNDLPGEMFGKLLSIPDELMWRYFELLSFRDMAEIEDFKVQVNAGENPQNIKRLLAEEIVARFHGGEAAQSAHKSAGNQVKLGEIPENVPVVHLEESDDQTEFSISYILRRADLVKNGAAAKDVLGRGAVFVDGAQVDPSFMVQRGSEHVIQAGKKKIAQIFVK</sequence>
<evidence type="ECO:0000255" key="1">
    <source>
        <dbReference type="HAMAP-Rule" id="MF_02007"/>
    </source>
</evidence>
<comment type="function">
    <text evidence="1">Catalyzes the attachment of tyrosine to tRNA(Tyr) in a two-step reaction: tyrosine is first activated by ATP to form Tyr-AMP and then transferred to the acceptor end of tRNA(Tyr).</text>
</comment>
<comment type="catalytic activity">
    <reaction evidence="1">
        <text>tRNA(Tyr) + L-tyrosine + ATP = L-tyrosyl-tRNA(Tyr) + AMP + diphosphate + H(+)</text>
        <dbReference type="Rhea" id="RHEA:10220"/>
        <dbReference type="Rhea" id="RHEA-COMP:9706"/>
        <dbReference type="Rhea" id="RHEA-COMP:9707"/>
        <dbReference type="ChEBI" id="CHEBI:15378"/>
        <dbReference type="ChEBI" id="CHEBI:30616"/>
        <dbReference type="ChEBI" id="CHEBI:33019"/>
        <dbReference type="ChEBI" id="CHEBI:58315"/>
        <dbReference type="ChEBI" id="CHEBI:78442"/>
        <dbReference type="ChEBI" id="CHEBI:78536"/>
        <dbReference type="ChEBI" id="CHEBI:456215"/>
        <dbReference type="EC" id="6.1.1.1"/>
    </reaction>
</comment>
<comment type="subunit">
    <text evidence="1">Homodimer.</text>
</comment>
<comment type="subcellular location">
    <subcellularLocation>
        <location evidence="1">Cytoplasm</location>
    </subcellularLocation>
</comment>
<comment type="similarity">
    <text evidence="1">Belongs to the class-I aminoacyl-tRNA synthetase family. TyrS type 2 subfamily.</text>
</comment>
<proteinExistence type="inferred from homology"/>
<accession>Q2S8Y9</accession>
<dbReference type="EC" id="6.1.1.1" evidence="1"/>
<dbReference type="EMBL" id="CP000155">
    <property type="protein sequence ID" value="ABC32885.1"/>
    <property type="molecule type" value="Genomic_DNA"/>
</dbReference>
<dbReference type="RefSeq" id="WP_011399941.1">
    <property type="nucleotide sequence ID" value="NC_007645.1"/>
</dbReference>
<dbReference type="SMR" id="Q2S8Y9"/>
<dbReference type="STRING" id="349521.HCH_06238"/>
<dbReference type="KEGG" id="hch:HCH_06238"/>
<dbReference type="eggNOG" id="COG0162">
    <property type="taxonomic scope" value="Bacteria"/>
</dbReference>
<dbReference type="HOGENOM" id="CLU_024003_5_0_6"/>
<dbReference type="OrthoDB" id="9804243at2"/>
<dbReference type="Proteomes" id="UP000000238">
    <property type="component" value="Chromosome"/>
</dbReference>
<dbReference type="GO" id="GO:0005829">
    <property type="term" value="C:cytosol"/>
    <property type="evidence" value="ECO:0007669"/>
    <property type="project" value="TreeGrafter"/>
</dbReference>
<dbReference type="GO" id="GO:0005524">
    <property type="term" value="F:ATP binding"/>
    <property type="evidence" value="ECO:0007669"/>
    <property type="project" value="UniProtKB-UniRule"/>
</dbReference>
<dbReference type="GO" id="GO:0003723">
    <property type="term" value="F:RNA binding"/>
    <property type="evidence" value="ECO:0007669"/>
    <property type="project" value="UniProtKB-KW"/>
</dbReference>
<dbReference type="GO" id="GO:0004831">
    <property type="term" value="F:tyrosine-tRNA ligase activity"/>
    <property type="evidence" value="ECO:0007669"/>
    <property type="project" value="UniProtKB-UniRule"/>
</dbReference>
<dbReference type="GO" id="GO:0006437">
    <property type="term" value="P:tyrosyl-tRNA aminoacylation"/>
    <property type="evidence" value="ECO:0007669"/>
    <property type="project" value="UniProtKB-UniRule"/>
</dbReference>
<dbReference type="CDD" id="cd00805">
    <property type="entry name" value="TyrRS_core"/>
    <property type="match status" value="1"/>
</dbReference>
<dbReference type="FunFam" id="1.10.240.10:FF:000006">
    <property type="entry name" value="Tyrosine--tRNA ligase"/>
    <property type="match status" value="1"/>
</dbReference>
<dbReference type="FunFam" id="3.40.50.620:FF:000061">
    <property type="entry name" value="Tyrosine--tRNA ligase"/>
    <property type="match status" value="1"/>
</dbReference>
<dbReference type="Gene3D" id="3.40.50.620">
    <property type="entry name" value="HUPs"/>
    <property type="match status" value="1"/>
</dbReference>
<dbReference type="Gene3D" id="3.10.290.10">
    <property type="entry name" value="RNA-binding S4 domain"/>
    <property type="match status" value="1"/>
</dbReference>
<dbReference type="Gene3D" id="1.10.240.10">
    <property type="entry name" value="Tyrosyl-Transfer RNA Synthetase"/>
    <property type="match status" value="1"/>
</dbReference>
<dbReference type="HAMAP" id="MF_02007">
    <property type="entry name" value="Tyr_tRNA_synth_type2"/>
    <property type="match status" value="1"/>
</dbReference>
<dbReference type="InterPro" id="IPR001412">
    <property type="entry name" value="aa-tRNA-synth_I_CS"/>
</dbReference>
<dbReference type="InterPro" id="IPR002305">
    <property type="entry name" value="aa-tRNA-synth_Ic"/>
</dbReference>
<dbReference type="InterPro" id="IPR014729">
    <property type="entry name" value="Rossmann-like_a/b/a_fold"/>
</dbReference>
<dbReference type="InterPro" id="IPR036986">
    <property type="entry name" value="S4_RNA-bd_sf"/>
</dbReference>
<dbReference type="InterPro" id="IPR002307">
    <property type="entry name" value="Tyr-tRNA-ligase"/>
</dbReference>
<dbReference type="InterPro" id="IPR024088">
    <property type="entry name" value="Tyr-tRNA-ligase_bac-type"/>
</dbReference>
<dbReference type="InterPro" id="IPR024108">
    <property type="entry name" value="Tyr-tRNA-ligase_bac_2"/>
</dbReference>
<dbReference type="NCBIfam" id="TIGR00234">
    <property type="entry name" value="tyrS"/>
    <property type="match status" value="1"/>
</dbReference>
<dbReference type="PANTHER" id="PTHR11766:SF1">
    <property type="entry name" value="TYROSINE--TRNA LIGASE"/>
    <property type="match status" value="1"/>
</dbReference>
<dbReference type="PANTHER" id="PTHR11766">
    <property type="entry name" value="TYROSYL-TRNA SYNTHETASE"/>
    <property type="match status" value="1"/>
</dbReference>
<dbReference type="Pfam" id="PF00579">
    <property type="entry name" value="tRNA-synt_1b"/>
    <property type="match status" value="1"/>
</dbReference>
<dbReference type="PRINTS" id="PR01040">
    <property type="entry name" value="TRNASYNTHTYR"/>
</dbReference>
<dbReference type="SUPFAM" id="SSF55174">
    <property type="entry name" value="Alpha-L RNA-binding motif"/>
    <property type="match status" value="1"/>
</dbReference>
<dbReference type="SUPFAM" id="SSF52374">
    <property type="entry name" value="Nucleotidylyl transferase"/>
    <property type="match status" value="1"/>
</dbReference>
<dbReference type="PROSITE" id="PS00178">
    <property type="entry name" value="AA_TRNA_LIGASE_I"/>
    <property type="match status" value="1"/>
</dbReference>
<dbReference type="PROSITE" id="PS50889">
    <property type="entry name" value="S4"/>
    <property type="match status" value="1"/>
</dbReference>
<keyword id="KW-0030">Aminoacyl-tRNA synthetase</keyword>
<keyword id="KW-0067">ATP-binding</keyword>
<keyword id="KW-0963">Cytoplasm</keyword>
<keyword id="KW-0436">Ligase</keyword>
<keyword id="KW-0547">Nucleotide-binding</keyword>
<keyword id="KW-0648">Protein biosynthesis</keyword>
<keyword id="KW-1185">Reference proteome</keyword>
<keyword id="KW-0694">RNA-binding</keyword>
<feature type="chain" id="PRO_0000236725" description="Tyrosine--tRNA ligase">
    <location>
        <begin position="1"/>
        <end position="400"/>
    </location>
</feature>
<feature type="domain" description="S4 RNA-binding" evidence="1">
    <location>
        <begin position="339"/>
        <end position="399"/>
    </location>
</feature>
<feature type="short sequence motif" description="'HIGH' region">
    <location>
        <begin position="42"/>
        <end position="51"/>
    </location>
</feature>
<feature type="short sequence motif" description="'KMSKS' region">
    <location>
        <begin position="226"/>
        <end position="230"/>
    </location>
</feature>
<feature type="binding site" evidence="1">
    <location>
        <position position="229"/>
    </location>
    <ligand>
        <name>ATP</name>
        <dbReference type="ChEBI" id="CHEBI:30616"/>
    </ligand>
</feature>
<reference key="1">
    <citation type="journal article" date="2005" name="Nucleic Acids Res.">
        <title>Genomic blueprint of Hahella chejuensis, a marine microbe producing an algicidal agent.</title>
        <authorList>
            <person name="Jeong H."/>
            <person name="Yim J.H."/>
            <person name="Lee C."/>
            <person name="Choi S.-H."/>
            <person name="Park Y.K."/>
            <person name="Yoon S.H."/>
            <person name="Hur C.-G."/>
            <person name="Kang H.-Y."/>
            <person name="Kim D."/>
            <person name="Lee H.H."/>
            <person name="Park K.H."/>
            <person name="Park S.-H."/>
            <person name="Park H.-S."/>
            <person name="Lee H.K."/>
            <person name="Oh T.K."/>
            <person name="Kim J.F."/>
        </authorList>
    </citation>
    <scope>NUCLEOTIDE SEQUENCE [LARGE SCALE GENOMIC DNA]</scope>
    <source>
        <strain>KCTC 2396</strain>
    </source>
</reference>
<protein>
    <recommendedName>
        <fullName evidence="1">Tyrosine--tRNA ligase</fullName>
        <ecNumber evidence="1">6.1.1.1</ecNumber>
    </recommendedName>
    <alternativeName>
        <fullName evidence="1">Tyrosyl-tRNA synthetase</fullName>
        <shortName evidence="1">TyrRS</shortName>
    </alternativeName>
</protein>
<gene>
    <name evidence="1" type="primary">tyrS</name>
    <name type="ordered locus">HCH_06238</name>
</gene>
<name>SYY_HAHCH</name>
<organism>
    <name type="scientific">Hahella chejuensis (strain KCTC 2396)</name>
    <dbReference type="NCBI Taxonomy" id="349521"/>
    <lineage>
        <taxon>Bacteria</taxon>
        <taxon>Pseudomonadati</taxon>
        <taxon>Pseudomonadota</taxon>
        <taxon>Gammaproteobacteria</taxon>
        <taxon>Oceanospirillales</taxon>
        <taxon>Hahellaceae</taxon>
        <taxon>Hahella</taxon>
    </lineage>
</organism>